<keyword id="KW-0030">Aminoacyl-tRNA synthetase</keyword>
<keyword id="KW-0067">ATP-binding</keyword>
<keyword id="KW-0963">Cytoplasm</keyword>
<keyword id="KW-0436">Ligase</keyword>
<keyword id="KW-0547">Nucleotide-binding</keyword>
<keyword id="KW-0648">Protein biosynthesis</keyword>
<keyword id="KW-1185">Reference proteome</keyword>
<accession>Q39RG4</accession>
<sequence length="291" mass="33389">MTFQDLILSLQGYWAKQGCVIQQPYDTEKGAGTFNPATFLRVLGPEPWNVAYVEPSRRPTDGRYGENPNRLQHYYQFQVIMKPSPLNILDLYLDSLRAFGIDPQKHDIRFVEDDWESPTLGAWGLGWEVWLDGMEITQFTYFQQAGGIDLKPVSSEITYGCERIAMYLQGVDNVYDLEWIKGVSYGDIHHRSEVEFSTYNFEEADVAMLLQLFTMYEKECVRLVERGLVLPAYDFVMKCSHTFNLLDARGAISVTERASYIGRVRNVARLCAEGYLKLRESLGFPLLKGGR</sequence>
<dbReference type="EC" id="6.1.1.14" evidence="1"/>
<dbReference type="EMBL" id="CP000148">
    <property type="protein sequence ID" value="ABB33160.1"/>
    <property type="molecule type" value="Genomic_DNA"/>
</dbReference>
<dbReference type="RefSeq" id="WP_004512878.1">
    <property type="nucleotide sequence ID" value="NC_007517.1"/>
</dbReference>
<dbReference type="SMR" id="Q39RG4"/>
<dbReference type="STRING" id="269799.Gmet_2942"/>
<dbReference type="KEGG" id="gme:Gmet_2942"/>
<dbReference type="eggNOG" id="COG0752">
    <property type="taxonomic scope" value="Bacteria"/>
</dbReference>
<dbReference type="HOGENOM" id="CLU_057066_1_0_7"/>
<dbReference type="Proteomes" id="UP000007073">
    <property type="component" value="Chromosome"/>
</dbReference>
<dbReference type="GO" id="GO:0005829">
    <property type="term" value="C:cytosol"/>
    <property type="evidence" value="ECO:0007669"/>
    <property type="project" value="TreeGrafter"/>
</dbReference>
<dbReference type="GO" id="GO:0005524">
    <property type="term" value="F:ATP binding"/>
    <property type="evidence" value="ECO:0007669"/>
    <property type="project" value="UniProtKB-UniRule"/>
</dbReference>
<dbReference type="GO" id="GO:0004820">
    <property type="term" value="F:glycine-tRNA ligase activity"/>
    <property type="evidence" value="ECO:0007669"/>
    <property type="project" value="UniProtKB-UniRule"/>
</dbReference>
<dbReference type="GO" id="GO:0006426">
    <property type="term" value="P:glycyl-tRNA aminoacylation"/>
    <property type="evidence" value="ECO:0007669"/>
    <property type="project" value="UniProtKB-UniRule"/>
</dbReference>
<dbReference type="CDD" id="cd00733">
    <property type="entry name" value="GlyRS_alpha_core"/>
    <property type="match status" value="1"/>
</dbReference>
<dbReference type="FunFam" id="3.30.930.10:FF:000006">
    <property type="entry name" value="Glycine--tRNA ligase alpha subunit"/>
    <property type="match status" value="1"/>
</dbReference>
<dbReference type="Gene3D" id="3.30.930.10">
    <property type="entry name" value="Bira Bifunctional Protein, Domain 2"/>
    <property type="match status" value="1"/>
</dbReference>
<dbReference type="Gene3D" id="1.20.58.180">
    <property type="entry name" value="Class II aaRS and biotin synthetases, domain 2"/>
    <property type="match status" value="1"/>
</dbReference>
<dbReference type="HAMAP" id="MF_00254">
    <property type="entry name" value="Gly_tRNA_synth_alpha"/>
    <property type="match status" value="1"/>
</dbReference>
<dbReference type="InterPro" id="IPR045864">
    <property type="entry name" value="aa-tRNA-synth_II/BPL/LPL"/>
</dbReference>
<dbReference type="InterPro" id="IPR006194">
    <property type="entry name" value="Gly-tRNA-synth_heterodimer"/>
</dbReference>
<dbReference type="InterPro" id="IPR002310">
    <property type="entry name" value="Gly-tRNA_ligase_asu"/>
</dbReference>
<dbReference type="NCBIfam" id="TIGR00388">
    <property type="entry name" value="glyQ"/>
    <property type="match status" value="1"/>
</dbReference>
<dbReference type="NCBIfam" id="NF006827">
    <property type="entry name" value="PRK09348.1"/>
    <property type="match status" value="1"/>
</dbReference>
<dbReference type="PANTHER" id="PTHR30075:SF2">
    <property type="entry name" value="GLYCINE--TRNA LIGASE, CHLOROPLASTIC_MITOCHONDRIAL 2"/>
    <property type="match status" value="1"/>
</dbReference>
<dbReference type="PANTHER" id="PTHR30075">
    <property type="entry name" value="GLYCYL-TRNA SYNTHETASE"/>
    <property type="match status" value="1"/>
</dbReference>
<dbReference type="Pfam" id="PF02091">
    <property type="entry name" value="tRNA-synt_2e"/>
    <property type="match status" value="1"/>
</dbReference>
<dbReference type="PRINTS" id="PR01044">
    <property type="entry name" value="TRNASYNTHGA"/>
</dbReference>
<dbReference type="SUPFAM" id="SSF55681">
    <property type="entry name" value="Class II aaRS and biotin synthetases"/>
    <property type="match status" value="1"/>
</dbReference>
<dbReference type="PROSITE" id="PS50861">
    <property type="entry name" value="AA_TRNA_LIGASE_II_GLYAB"/>
    <property type="match status" value="1"/>
</dbReference>
<organism>
    <name type="scientific">Geobacter metallireducens (strain ATCC 53774 / DSM 7210 / GS-15)</name>
    <dbReference type="NCBI Taxonomy" id="269799"/>
    <lineage>
        <taxon>Bacteria</taxon>
        <taxon>Pseudomonadati</taxon>
        <taxon>Thermodesulfobacteriota</taxon>
        <taxon>Desulfuromonadia</taxon>
        <taxon>Geobacterales</taxon>
        <taxon>Geobacteraceae</taxon>
        <taxon>Geobacter</taxon>
    </lineage>
</organism>
<protein>
    <recommendedName>
        <fullName evidence="1">Glycine--tRNA ligase alpha subunit</fullName>
        <ecNumber evidence="1">6.1.1.14</ecNumber>
    </recommendedName>
    <alternativeName>
        <fullName evidence="1">Glycyl-tRNA synthetase alpha subunit</fullName>
        <shortName evidence="1">GlyRS</shortName>
    </alternativeName>
</protein>
<evidence type="ECO:0000255" key="1">
    <source>
        <dbReference type="HAMAP-Rule" id="MF_00254"/>
    </source>
</evidence>
<comment type="catalytic activity">
    <reaction evidence="1">
        <text>tRNA(Gly) + glycine + ATP = glycyl-tRNA(Gly) + AMP + diphosphate</text>
        <dbReference type="Rhea" id="RHEA:16013"/>
        <dbReference type="Rhea" id="RHEA-COMP:9664"/>
        <dbReference type="Rhea" id="RHEA-COMP:9683"/>
        <dbReference type="ChEBI" id="CHEBI:30616"/>
        <dbReference type="ChEBI" id="CHEBI:33019"/>
        <dbReference type="ChEBI" id="CHEBI:57305"/>
        <dbReference type="ChEBI" id="CHEBI:78442"/>
        <dbReference type="ChEBI" id="CHEBI:78522"/>
        <dbReference type="ChEBI" id="CHEBI:456215"/>
        <dbReference type="EC" id="6.1.1.14"/>
    </reaction>
</comment>
<comment type="subunit">
    <text evidence="1">Tetramer of two alpha and two beta subunits.</text>
</comment>
<comment type="subcellular location">
    <subcellularLocation>
        <location evidence="1">Cytoplasm</location>
    </subcellularLocation>
</comment>
<comment type="similarity">
    <text evidence="1">Belongs to the class-II aminoacyl-tRNA synthetase family.</text>
</comment>
<name>SYGA_GEOMG</name>
<gene>
    <name evidence="1" type="primary">glyQ</name>
    <name type="ordered locus">Gmet_2942</name>
</gene>
<reference key="1">
    <citation type="journal article" date="2009" name="BMC Microbiol.">
        <title>The genome sequence of Geobacter metallireducens: features of metabolism, physiology and regulation common and dissimilar to Geobacter sulfurreducens.</title>
        <authorList>
            <person name="Aklujkar M."/>
            <person name="Krushkal J."/>
            <person name="DiBartolo G."/>
            <person name="Lapidus A."/>
            <person name="Land M.L."/>
            <person name="Lovley D.R."/>
        </authorList>
    </citation>
    <scope>NUCLEOTIDE SEQUENCE [LARGE SCALE GENOMIC DNA]</scope>
    <source>
        <strain>ATCC 53774 / DSM 7210 / GS-15</strain>
    </source>
</reference>
<feature type="chain" id="PRO_1000047424" description="Glycine--tRNA ligase alpha subunit">
    <location>
        <begin position="1"/>
        <end position="291"/>
    </location>
</feature>
<proteinExistence type="inferred from homology"/>